<proteinExistence type="inferred from homology"/>
<evidence type="ECO:0000255" key="1">
    <source>
        <dbReference type="HAMAP-Rule" id="MF_00127"/>
    </source>
</evidence>
<organism>
    <name type="scientific">Staphylococcus aureus (strain Mu3 / ATCC 700698)</name>
    <dbReference type="NCBI Taxonomy" id="418127"/>
    <lineage>
        <taxon>Bacteria</taxon>
        <taxon>Bacillati</taxon>
        <taxon>Bacillota</taxon>
        <taxon>Bacilli</taxon>
        <taxon>Bacillales</taxon>
        <taxon>Staphylococcaceae</taxon>
        <taxon>Staphylococcus</taxon>
    </lineage>
</organism>
<keyword id="KW-0030">Aminoacyl-tRNA synthetase</keyword>
<keyword id="KW-0067">ATP-binding</keyword>
<keyword id="KW-0963">Cytoplasm</keyword>
<keyword id="KW-0436">Ligase</keyword>
<keyword id="KW-0547">Nucleotide-binding</keyword>
<keyword id="KW-0648">Protein biosynthesis</keyword>
<dbReference type="EC" id="6.1.1.21" evidence="1"/>
<dbReference type="EMBL" id="AP009324">
    <property type="protein sequence ID" value="BAF78501.1"/>
    <property type="molecule type" value="Genomic_DNA"/>
</dbReference>
<dbReference type="RefSeq" id="WP_000590826.1">
    <property type="nucleotide sequence ID" value="NZ_CTYB01000003.1"/>
</dbReference>
<dbReference type="SMR" id="A7X345"/>
<dbReference type="KEGG" id="saw:SAHV_1618"/>
<dbReference type="HOGENOM" id="CLU_025113_1_1_9"/>
<dbReference type="GO" id="GO:0005737">
    <property type="term" value="C:cytoplasm"/>
    <property type="evidence" value="ECO:0007669"/>
    <property type="project" value="UniProtKB-SubCell"/>
</dbReference>
<dbReference type="GO" id="GO:0005524">
    <property type="term" value="F:ATP binding"/>
    <property type="evidence" value="ECO:0007669"/>
    <property type="project" value="UniProtKB-UniRule"/>
</dbReference>
<dbReference type="GO" id="GO:0140096">
    <property type="term" value="F:catalytic activity, acting on a protein"/>
    <property type="evidence" value="ECO:0007669"/>
    <property type="project" value="UniProtKB-ARBA"/>
</dbReference>
<dbReference type="GO" id="GO:0004821">
    <property type="term" value="F:histidine-tRNA ligase activity"/>
    <property type="evidence" value="ECO:0007669"/>
    <property type="project" value="UniProtKB-UniRule"/>
</dbReference>
<dbReference type="GO" id="GO:0016740">
    <property type="term" value="F:transferase activity"/>
    <property type="evidence" value="ECO:0007669"/>
    <property type="project" value="UniProtKB-ARBA"/>
</dbReference>
<dbReference type="GO" id="GO:0006427">
    <property type="term" value="P:histidyl-tRNA aminoacylation"/>
    <property type="evidence" value="ECO:0007669"/>
    <property type="project" value="UniProtKB-UniRule"/>
</dbReference>
<dbReference type="CDD" id="cd00738">
    <property type="entry name" value="HGTP_anticodon"/>
    <property type="match status" value="1"/>
</dbReference>
<dbReference type="CDD" id="cd00773">
    <property type="entry name" value="HisRS-like_core"/>
    <property type="match status" value="1"/>
</dbReference>
<dbReference type="FunFam" id="3.30.930.10:FF:000005">
    <property type="entry name" value="Histidine--tRNA ligase"/>
    <property type="match status" value="1"/>
</dbReference>
<dbReference type="Gene3D" id="3.40.50.800">
    <property type="entry name" value="Anticodon-binding domain"/>
    <property type="match status" value="1"/>
</dbReference>
<dbReference type="Gene3D" id="3.30.930.10">
    <property type="entry name" value="Bira Bifunctional Protein, Domain 2"/>
    <property type="match status" value="1"/>
</dbReference>
<dbReference type="HAMAP" id="MF_00127">
    <property type="entry name" value="His_tRNA_synth"/>
    <property type="match status" value="1"/>
</dbReference>
<dbReference type="InterPro" id="IPR006195">
    <property type="entry name" value="aa-tRNA-synth_II"/>
</dbReference>
<dbReference type="InterPro" id="IPR045864">
    <property type="entry name" value="aa-tRNA-synth_II/BPL/LPL"/>
</dbReference>
<dbReference type="InterPro" id="IPR004154">
    <property type="entry name" value="Anticodon-bd"/>
</dbReference>
<dbReference type="InterPro" id="IPR036621">
    <property type="entry name" value="Anticodon-bd_dom_sf"/>
</dbReference>
<dbReference type="InterPro" id="IPR015807">
    <property type="entry name" value="His-tRNA-ligase"/>
</dbReference>
<dbReference type="InterPro" id="IPR041715">
    <property type="entry name" value="HisRS-like_core"/>
</dbReference>
<dbReference type="InterPro" id="IPR004516">
    <property type="entry name" value="HisRS/HisZ"/>
</dbReference>
<dbReference type="NCBIfam" id="TIGR00442">
    <property type="entry name" value="hisS"/>
    <property type="match status" value="1"/>
</dbReference>
<dbReference type="PANTHER" id="PTHR43707:SF1">
    <property type="entry name" value="HISTIDINE--TRNA LIGASE, MITOCHONDRIAL-RELATED"/>
    <property type="match status" value="1"/>
</dbReference>
<dbReference type="PANTHER" id="PTHR43707">
    <property type="entry name" value="HISTIDYL-TRNA SYNTHETASE"/>
    <property type="match status" value="1"/>
</dbReference>
<dbReference type="Pfam" id="PF03129">
    <property type="entry name" value="HGTP_anticodon"/>
    <property type="match status" value="1"/>
</dbReference>
<dbReference type="Pfam" id="PF13393">
    <property type="entry name" value="tRNA-synt_His"/>
    <property type="match status" value="1"/>
</dbReference>
<dbReference type="PIRSF" id="PIRSF001549">
    <property type="entry name" value="His-tRNA_synth"/>
    <property type="match status" value="1"/>
</dbReference>
<dbReference type="SUPFAM" id="SSF52954">
    <property type="entry name" value="Class II aaRS ABD-related"/>
    <property type="match status" value="1"/>
</dbReference>
<dbReference type="SUPFAM" id="SSF55681">
    <property type="entry name" value="Class II aaRS and biotin synthetases"/>
    <property type="match status" value="1"/>
</dbReference>
<dbReference type="PROSITE" id="PS50862">
    <property type="entry name" value="AA_TRNA_LIGASE_II"/>
    <property type="match status" value="1"/>
</dbReference>
<comment type="catalytic activity">
    <reaction evidence="1">
        <text>tRNA(His) + L-histidine + ATP = L-histidyl-tRNA(His) + AMP + diphosphate + H(+)</text>
        <dbReference type="Rhea" id="RHEA:17313"/>
        <dbReference type="Rhea" id="RHEA-COMP:9665"/>
        <dbReference type="Rhea" id="RHEA-COMP:9689"/>
        <dbReference type="ChEBI" id="CHEBI:15378"/>
        <dbReference type="ChEBI" id="CHEBI:30616"/>
        <dbReference type="ChEBI" id="CHEBI:33019"/>
        <dbReference type="ChEBI" id="CHEBI:57595"/>
        <dbReference type="ChEBI" id="CHEBI:78442"/>
        <dbReference type="ChEBI" id="CHEBI:78527"/>
        <dbReference type="ChEBI" id="CHEBI:456215"/>
        <dbReference type="EC" id="6.1.1.21"/>
    </reaction>
</comment>
<comment type="subunit">
    <text evidence="1">Homodimer.</text>
</comment>
<comment type="subcellular location">
    <subcellularLocation>
        <location evidence="1">Cytoplasm</location>
    </subcellularLocation>
</comment>
<comment type="similarity">
    <text evidence="1">Belongs to the class-II aminoacyl-tRNA synthetase family.</text>
</comment>
<name>SYH_STAA1</name>
<protein>
    <recommendedName>
        <fullName evidence="1">Histidine--tRNA ligase</fullName>
        <ecNumber evidence="1">6.1.1.21</ecNumber>
    </recommendedName>
    <alternativeName>
        <fullName evidence="1">Histidyl-tRNA synthetase</fullName>
        <shortName evidence="1">HisRS</shortName>
    </alternativeName>
</protein>
<sequence length="420" mass="48283">MIKIPRGTQDILPEDSKKWRYIENQLDELMTFYNYKEIRTPIFESTDLFARGVGDSTDVVQKEMYTFKDKGDRSITLRPEGTAAVVRSYIEHKMQGNPNQPIKLYYNGPMFRYERKQKGRYRQFNQFGVEAIGAENPSVDAEVLAMVMHIYQSFGLKHLKLVINSVGDMASRKEYNEALVKHFEPVIHEFCSDCQSRLHTNPMRILDCKVDRDKEAIKTAPRITDFLNEESKAYYEQVKAYLDDLGIPYIEDPNLVRGLDYYTHTAFELMMDNPNYDGAITTLCGGGRYNGLLELLDGPSETGIGFALSIERLLLALEEEGIELDIEENLDLFIVTMGDQADRYAVKLLNHLRHNGIKADKDYLQRKIKGQMKQADRLGAKFTIVIGDQELENNKIDVKNMTTGESETIELDALVEYFKK</sequence>
<accession>A7X345</accession>
<gene>
    <name evidence="1" type="primary">hisS</name>
    <name type="ordered locus">SAHV_1618</name>
</gene>
<feature type="chain" id="PRO_1000016458" description="Histidine--tRNA ligase">
    <location>
        <begin position="1"/>
        <end position="420"/>
    </location>
</feature>
<reference key="1">
    <citation type="journal article" date="2008" name="Antimicrob. Agents Chemother.">
        <title>Mutated response regulator graR is responsible for phenotypic conversion of Staphylococcus aureus from heterogeneous vancomycin-intermediate resistance to vancomycin-intermediate resistance.</title>
        <authorList>
            <person name="Neoh H.-M."/>
            <person name="Cui L."/>
            <person name="Yuzawa H."/>
            <person name="Takeuchi F."/>
            <person name="Matsuo M."/>
            <person name="Hiramatsu K."/>
        </authorList>
    </citation>
    <scope>NUCLEOTIDE SEQUENCE [LARGE SCALE GENOMIC DNA]</scope>
    <source>
        <strain>Mu3 / ATCC 700698</strain>
    </source>
</reference>